<name>TRUA_STRU0</name>
<dbReference type="EC" id="5.4.99.12" evidence="1"/>
<dbReference type="EMBL" id="AM946015">
    <property type="protein sequence ID" value="CAR40884.1"/>
    <property type="molecule type" value="Genomic_DNA"/>
</dbReference>
<dbReference type="RefSeq" id="WP_012657860.1">
    <property type="nucleotide sequence ID" value="NC_012004.1"/>
</dbReference>
<dbReference type="SMR" id="B9DTJ0"/>
<dbReference type="STRING" id="218495.SUB0317"/>
<dbReference type="KEGG" id="sub:SUB0317"/>
<dbReference type="eggNOG" id="COG0101">
    <property type="taxonomic scope" value="Bacteria"/>
</dbReference>
<dbReference type="HOGENOM" id="CLU_014673_0_1_9"/>
<dbReference type="OrthoDB" id="9811823at2"/>
<dbReference type="Proteomes" id="UP000000449">
    <property type="component" value="Chromosome"/>
</dbReference>
<dbReference type="GO" id="GO:0003723">
    <property type="term" value="F:RNA binding"/>
    <property type="evidence" value="ECO:0007669"/>
    <property type="project" value="InterPro"/>
</dbReference>
<dbReference type="GO" id="GO:0160147">
    <property type="term" value="F:tRNA pseudouridine(38-40) synthase activity"/>
    <property type="evidence" value="ECO:0007669"/>
    <property type="project" value="UniProtKB-EC"/>
</dbReference>
<dbReference type="GO" id="GO:0031119">
    <property type="term" value="P:tRNA pseudouridine synthesis"/>
    <property type="evidence" value="ECO:0007669"/>
    <property type="project" value="UniProtKB-UniRule"/>
</dbReference>
<dbReference type="CDD" id="cd02570">
    <property type="entry name" value="PseudoU_synth_EcTruA"/>
    <property type="match status" value="1"/>
</dbReference>
<dbReference type="FunFam" id="3.30.70.580:FF:000001">
    <property type="entry name" value="tRNA pseudouridine synthase A"/>
    <property type="match status" value="1"/>
</dbReference>
<dbReference type="Gene3D" id="3.30.70.660">
    <property type="entry name" value="Pseudouridine synthase I, catalytic domain, C-terminal subdomain"/>
    <property type="match status" value="1"/>
</dbReference>
<dbReference type="Gene3D" id="3.30.70.580">
    <property type="entry name" value="Pseudouridine synthase I, catalytic domain, N-terminal subdomain"/>
    <property type="match status" value="1"/>
</dbReference>
<dbReference type="HAMAP" id="MF_00171">
    <property type="entry name" value="TruA"/>
    <property type="match status" value="1"/>
</dbReference>
<dbReference type="InterPro" id="IPR020103">
    <property type="entry name" value="PsdUridine_synth_cat_dom_sf"/>
</dbReference>
<dbReference type="InterPro" id="IPR001406">
    <property type="entry name" value="PsdUridine_synth_TruA"/>
</dbReference>
<dbReference type="InterPro" id="IPR020097">
    <property type="entry name" value="PsdUridine_synth_TruA_a/b_dom"/>
</dbReference>
<dbReference type="InterPro" id="IPR020095">
    <property type="entry name" value="PsdUridine_synth_TruA_C"/>
</dbReference>
<dbReference type="InterPro" id="IPR020094">
    <property type="entry name" value="TruA/RsuA/RluB/E/F_N"/>
</dbReference>
<dbReference type="NCBIfam" id="TIGR00071">
    <property type="entry name" value="hisT_truA"/>
    <property type="match status" value="1"/>
</dbReference>
<dbReference type="PANTHER" id="PTHR11142">
    <property type="entry name" value="PSEUDOURIDYLATE SYNTHASE"/>
    <property type="match status" value="1"/>
</dbReference>
<dbReference type="PANTHER" id="PTHR11142:SF0">
    <property type="entry name" value="TRNA PSEUDOURIDINE SYNTHASE-LIKE 1"/>
    <property type="match status" value="1"/>
</dbReference>
<dbReference type="Pfam" id="PF01416">
    <property type="entry name" value="PseudoU_synth_1"/>
    <property type="match status" value="2"/>
</dbReference>
<dbReference type="PIRSF" id="PIRSF001430">
    <property type="entry name" value="tRNA_psdUrid_synth"/>
    <property type="match status" value="1"/>
</dbReference>
<dbReference type="SUPFAM" id="SSF55120">
    <property type="entry name" value="Pseudouridine synthase"/>
    <property type="match status" value="1"/>
</dbReference>
<comment type="function">
    <text evidence="1">Formation of pseudouridine at positions 38, 39 and 40 in the anticodon stem and loop of transfer RNAs.</text>
</comment>
<comment type="catalytic activity">
    <reaction evidence="1">
        <text>uridine(38/39/40) in tRNA = pseudouridine(38/39/40) in tRNA</text>
        <dbReference type="Rhea" id="RHEA:22376"/>
        <dbReference type="Rhea" id="RHEA-COMP:10085"/>
        <dbReference type="Rhea" id="RHEA-COMP:10087"/>
        <dbReference type="ChEBI" id="CHEBI:65314"/>
        <dbReference type="ChEBI" id="CHEBI:65315"/>
        <dbReference type="EC" id="5.4.99.12"/>
    </reaction>
</comment>
<comment type="subunit">
    <text evidence="1">Homodimer.</text>
</comment>
<comment type="similarity">
    <text evidence="1">Belongs to the tRNA pseudouridine synthase TruA family.</text>
</comment>
<evidence type="ECO:0000255" key="1">
    <source>
        <dbReference type="HAMAP-Rule" id="MF_00171"/>
    </source>
</evidence>
<feature type="chain" id="PRO_1000194576" description="tRNA pseudouridine synthase A">
    <location>
        <begin position="1"/>
        <end position="250"/>
    </location>
</feature>
<feature type="active site" description="Nucleophile" evidence="1">
    <location>
        <position position="53"/>
    </location>
</feature>
<feature type="binding site" evidence="1">
    <location>
        <position position="111"/>
    </location>
    <ligand>
        <name>substrate</name>
    </ligand>
</feature>
<protein>
    <recommendedName>
        <fullName evidence="1">tRNA pseudouridine synthase A</fullName>
        <ecNumber evidence="1">5.4.99.12</ecNumber>
    </recommendedName>
    <alternativeName>
        <fullName evidence="1">tRNA pseudouridine(38-40) synthase</fullName>
    </alternativeName>
    <alternativeName>
        <fullName evidence="1">tRNA pseudouridylate synthase I</fullName>
    </alternativeName>
    <alternativeName>
        <fullName evidence="1">tRNA-uridine isomerase I</fullName>
    </alternativeName>
</protein>
<keyword id="KW-0413">Isomerase</keyword>
<keyword id="KW-1185">Reference proteome</keyword>
<keyword id="KW-0819">tRNA processing</keyword>
<organism>
    <name type="scientific">Streptococcus uberis (strain ATCC BAA-854 / 0140J)</name>
    <dbReference type="NCBI Taxonomy" id="218495"/>
    <lineage>
        <taxon>Bacteria</taxon>
        <taxon>Bacillati</taxon>
        <taxon>Bacillota</taxon>
        <taxon>Bacilli</taxon>
        <taxon>Lactobacillales</taxon>
        <taxon>Streptococcaceae</taxon>
        <taxon>Streptococcus</taxon>
    </lineage>
</organism>
<reference key="1">
    <citation type="journal article" date="2009" name="BMC Genomics">
        <title>Evidence for niche adaptation in the genome of the bovine pathogen Streptococcus uberis.</title>
        <authorList>
            <person name="Ward P.N."/>
            <person name="Holden M.T.G."/>
            <person name="Leigh J.A."/>
            <person name="Lennard N."/>
            <person name="Bignell A."/>
            <person name="Barron A."/>
            <person name="Clark L."/>
            <person name="Quail M.A."/>
            <person name="Woodward J."/>
            <person name="Barrell B.G."/>
            <person name="Egan S.A."/>
            <person name="Field T.R."/>
            <person name="Maskell D."/>
            <person name="Kehoe M."/>
            <person name="Dowson C.G."/>
            <person name="Chanter N."/>
            <person name="Whatmore A.M."/>
            <person name="Bentley S.D."/>
            <person name="Parkhill J."/>
        </authorList>
    </citation>
    <scope>NUCLEOTIDE SEQUENCE [LARGE SCALE GENOMIC DNA]</scope>
    <source>
        <strain>ATCC BAA-854 / 0140J</strain>
    </source>
</reference>
<accession>B9DTJ0</accession>
<sequence>MTRYKAIISYDGSQFQGFQRQSHARSVQEEIEKTLTKLTNGKEIKVHGAGRTDSGVHAYGQVLHFDLDQDRDLEKLRFALDTQSPEDIDFISVEKVSDDFHSRYTKHLKTYEFIVDIGRPKNPMMRHYATHFPYPLDLDNIQLAIKDLIGTHDFTGFTASGATIENKVRTIIDASVRYEEDKNFLIFTFTGNGFLYKQVRNMVGTLLKIGNNRMPVDQIKTILEKKDRQLAGPTPAGNGLYLKEIIYEDK</sequence>
<gene>
    <name evidence="1" type="primary">truA</name>
    <name type="ordered locus">SUB0317</name>
</gene>
<proteinExistence type="inferred from homology"/>